<organism>
    <name type="scientific">Nitrobacter winogradskyi (strain ATCC 25391 / DSM 10237 / CIP 104748 / NCIMB 11846 / Nb-255)</name>
    <dbReference type="NCBI Taxonomy" id="323098"/>
    <lineage>
        <taxon>Bacteria</taxon>
        <taxon>Pseudomonadati</taxon>
        <taxon>Pseudomonadota</taxon>
        <taxon>Alphaproteobacteria</taxon>
        <taxon>Hyphomicrobiales</taxon>
        <taxon>Nitrobacteraceae</taxon>
        <taxon>Nitrobacter</taxon>
    </lineage>
</organism>
<keyword id="KW-1185">Reference proteome</keyword>
<feature type="chain" id="PRO_0000227070" description="Protein SlyX homolog">
    <location>
        <begin position="1"/>
        <end position="70"/>
    </location>
</feature>
<dbReference type="EMBL" id="CP000115">
    <property type="protein sequence ID" value="ABA06249.1"/>
    <property type="molecule type" value="Genomic_DNA"/>
</dbReference>
<dbReference type="RefSeq" id="WP_011316171.1">
    <property type="nucleotide sequence ID" value="NC_007406.1"/>
</dbReference>
<dbReference type="SMR" id="Q3SN92"/>
<dbReference type="STRING" id="323098.Nwi_2999"/>
<dbReference type="KEGG" id="nwi:Nwi_2999"/>
<dbReference type="eggNOG" id="COG2900">
    <property type="taxonomic scope" value="Bacteria"/>
</dbReference>
<dbReference type="HOGENOM" id="CLU_180796_5_3_5"/>
<dbReference type="OrthoDB" id="5422806at2"/>
<dbReference type="Proteomes" id="UP000002531">
    <property type="component" value="Chromosome"/>
</dbReference>
<dbReference type="Gene3D" id="1.20.5.300">
    <property type="match status" value="1"/>
</dbReference>
<dbReference type="HAMAP" id="MF_00715">
    <property type="entry name" value="SlyX"/>
    <property type="match status" value="1"/>
</dbReference>
<dbReference type="InterPro" id="IPR007236">
    <property type="entry name" value="SlyX"/>
</dbReference>
<dbReference type="PANTHER" id="PTHR36508">
    <property type="entry name" value="PROTEIN SLYX"/>
    <property type="match status" value="1"/>
</dbReference>
<dbReference type="PANTHER" id="PTHR36508:SF1">
    <property type="entry name" value="PROTEIN SLYX"/>
    <property type="match status" value="1"/>
</dbReference>
<dbReference type="Pfam" id="PF04102">
    <property type="entry name" value="SlyX"/>
    <property type="match status" value="1"/>
</dbReference>
<proteinExistence type="inferred from homology"/>
<sequence length="70" mass="8042">MTDETFADRIDALEMRATYQEEAIETLNQVVTTQWKQIDALMRQIAEIGERLREAEAARPAPANEPPPHY</sequence>
<name>SLYX_NITWN</name>
<comment type="similarity">
    <text evidence="1">Belongs to the SlyX family.</text>
</comment>
<gene>
    <name evidence="1" type="primary">slyX</name>
    <name type="ordered locus">Nwi_2999</name>
</gene>
<evidence type="ECO:0000255" key="1">
    <source>
        <dbReference type="HAMAP-Rule" id="MF_00715"/>
    </source>
</evidence>
<reference key="1">
    <citation type="journal article" date="2006" name="Appl. Environ. Microbiol.">
        <title>Genome sequence of the chemolithoautotrophic nitrite-oxidizing bacterium Nitrobacter winogradskyi Nb-255.</title>
        <authorList>
            <person name="Starkenburg S.R."/>
            <person name="Chain P.S.G."/>
            <person name="Sayavedra-Soto L.A."/>
            <person name="Hauser L."/>
            <person name="Land M.L."/>
            <person name="Larimer F.W."/>
            <person name="Malfatti S.A."/>
            <person name="Klotz M.G."/>
            <person name="Bottomley P.J."/>
            <person name="Arp D.J."/>
            <person name="Hickey W.J."/>
        </authorList>
    </citation>
    <scope>NUCLEOTIDE SEQUENCE [LARGE SCALE GENOMIC DNA]</scope>
    <source>
        <strain>ATCC 25391 / DSM 10237 / CIP 104748 / NCIMB 11846 / Nb-255</strain>
    </source>
</reference>
<protein>
    <recommendedName>
        <fullName evidence="1">Protein SlyX homolog</fullName>
    </recommendedName>
</protein>
<accession>Q3SN92</accession>